<proteinExistence type="inferred from homology"/>
<protein>
    <recommendedName>
        <fullName evidence="1">DNA-directed RNA polymerase subunit alpha</fullName>
        <shortName evidence="1">RNAP subunit alpha</shortName>
        <ecNumber evidence="1">2.7.7.6</ecNumber>
    </recommendedName>
    <alternativeName>
        <fullName evidence="1">RNA polymerase subunit alpha</fullName>
    </alternativeName>
    <alternativeName>
        <fullName evidence="1">Transcriptase subunit alpha</fullName>
    </alternativeName>
</protein>
<organism>
    <name type="scientific">Polaromonas sp. (strain JS666 / ATCC BAA-500)</name>
    <dbReference type="NCBI Taxonomy" id="296591"/>
    <lineage>
        <taxon>Bacteria</taxon>
        <taxon>Pseudomonadati</taxon>
        <taxon>Pseudomonadota</taxon>
        <taxon>Betaproteobacteria</taxon>
        <taxon>Burkholderiales</taxon>
        <taxon>Comamonadaceae</taxon>
        <taxon>Polaromonas</taxon>
    </lineage>
</organism>
<evidence type="ECO:0000255" key="1">
    <source>
        <dbReference type="HAMAP-Rule" id="MF_00059"/>
    </source>
</evidence>
<dbReference type="EC" id="2.7.7.6" evidence="1"/>
<dbReference type="EMBL" id="CP000316">
    <property type="protein sequence ID" value="ABE42465.1"/>
    <property type="molecule type" value="Genomic_DNA"/>
</dbReference>
<dbReference type="RefSeq" id="WP_011481468.1">
    <property type="nucleotide sequence ID" value="NC_007948.1"/>
</dbReference>
<dbReference type="SMR" id="Q12G77"/>
<dbReference type="STRING" id="296591.Bpro_0501"/>
<dbReference type="KEGG" id="pol:Bpro_0501"/>
<dbReference type="eggNOG" id="COG0202">
    <property type="taxonomic scope" value="Bacteria"/>
</dbReference>
<dbReference type="HOGENOM" id="CLU_053084_0_1_4"/>
<dbReference type="OrthoDB" id="9805706at2"/>
<dbReference type="Proteomes" id="UP000001983">
    <property type="component" value="Chromosome"/>
</dbReference>
<dbReference type="GO" id="GO:0005737">
    <property type="term" value="C:cytoplasm"/>
    <property type="evidence" value="ECO:0007669"/>
    <property type="project" value="UniProtKB-ARBA"/>
</dbReference>
<dbReference type="GO" id="GO:0000428">
    <property type="term" value="C:DNA-directed RNA polymerase complex"/>
    <property type="evidence" value="ECO:0007669"/>
    <property type="project" value="UniProtKB-KW"/>
</dbReference>
<dbReference type="GO" id="GO:0003677">
    <property type="term" value="F:DNA binding"/>
    <property type="evidence" value="ECO:0007669"/>
    <property type="project" value="UniProtKB-UniRule"/>
</dbReference>
<dbReference type="GO" id="GO:0003899">
    <property type="term" value="F:DNA-directed RNA polymerase activity"/>
    <property type="evidence" value="ECO:0007669"/>
    <property type="project" value="UniProtKB-UniRule"/>
</dbReference>
<dbReference type="GO" id="GO:0046983">
    <property type="term" value="F:protein dimerization activity"/>
    <property type="evidence" value="ECO:0007669"/>
    <property type="project" value="InterPro"/>
</dbReference>
<dbReference type="GO" id="GO:0006351">
    <property type="term" value="P:DNA-templated transcription"/>
    <property type="evidence" value="ECO:0007669"/>
    <property type="project" value="UniProtKB-UniRule"/>
</dbReference>
<dbReference type="CDD" id="cd06928">
    <property type="entry name" value="RNAP_alpha_NTD"/>
    <property type="match status" value="1"/>
</dbReference>
<dbReference type="FunFam" id="1.10.150.20:FF:000001">
    <property type="entry name" value="DNA-directed RNA polymerase subunit alpha"/>
    <property type="match status" value="1"/>
</dbReference>
<dbReference type="FunFam" id="2.170.120.12:FF:000001">
    <property type="entry name" value="DNA-directed RNA polymerase subunit alpha"/>
    <property type="match status" value="1"/>
</dbReference>
<dbReference type="Gene3D" id="1.10.150.20">
    <property type="entry name" value="5' to 3' exonuclease, C-terminal subdomain"/>
    <property type="match status" value="1"/>
</dbReference>
<dbReference type="Gene3D" id="2.170.120.12">
    <property type="entry name" value="DNA-directed RNA polymerase, insert domain"/>
    <property type="match status" value="1"/>
</dbReference>
<dbReference type="Gene3D" id="3.30.1360.10">
    <property type="entry name" value="RNA polymerase, RBP11-like subunit"/>
    <property type="match status" value="1"/>
</dbReference>
<dbReference type="HAMAP" id="MF_00059">
    <property type="entry name" value="RNApol_bact_RpoA"/>
    <property type="match status" value="1"/>
</dbReference>
<dbReference type="InterPro" id="IPR011262">
    <property type="entry name" value="DNA-dir_RNA_pol_insert"/>
</dbReference>
<dbReference type="InterPro" id="IPR011263">
    <property type="entry name" value="DNA-dir_RNA_pol_RpoA/D/Rpb3"/>
</dbReference>
<dbReference type="InterPro" id="IPR011773">
    <property type="entry name" value="DNA-dir_RpoA"/>
</dbReference>
<dbReference type="InterPro" id="IPR036603">
    <property type="entry name" value="RBP11-like"/>
</dbReference>
<dbReference type="InterPro" id="IPR011260">
    <property type="entry name" value="RNAP_asu_C"/>
</dbReference>
<dbReference type="InterPro" id="IPR036643">
    <property type="entry name" value="RNApol_insert_sf"/>
</dbReference>
<dbReference type="NCBIfam" id="NF003513">
    <property type="entry name" value="PRK05182.1-2"/>
    <property type="match status" value="1"/>
</dbReference>
<dbReference type="NCBIfam" id="NF003519">
    <property type="entry name" value="PRK05182.2-5"/>
    <property type="match status" value="1"/>
</dbReference>
<dbReference type="NCBIfam" id="TIGR02027">
    <property type="entry name" value="rpoA"/>
    <property type="match status" value="1"/>
</dbReference>
<dbReference type="Pfam" id="PF01000">
    <property type="entry name" value="RNA_pol_A_bac"/>
    <property type="match status" value="1"/>
</dbReference>
<dbReference type="Pfam" id="PF03118">
    <property type="entry name" value="RNA_pol_A_CTD"/>
    <property type="match status" value="1"/>
</dbReference>
<dbReference type="Pfam" id="PF01193">
    <property type="entry name" value="RNA_pol_L"/>
    <property type="match status" value="1"/>
</dbReference>
<dbReference type="SMART" id="SM00662">
    <property type="entry name" value="RPOLD"/>
    <property type="match status" value="1"/>
</dbReference>
<dbReference type="SUPFAM" id="SSF47789">
    <property type="entry name" value="C-terminal domain of RNA polymerase alpha subunit"/>
    <property type="match status" value="1"/>
</dbReference>
<dbReference type="SUPFAM" id="SSF56553">
    <property type="entry name" value="Insert subdomain of RNA polymerase alpha subunit"/>
    <property type="match status" value="1"/>
</dbReference>
<dbReference type="SUPFAM" id="SSF55257">
    <property type="entry name" value="RBP11-like subunits of RNA polymerase"/>
    <property type="match status" value="1"/>
</dbReference>
<feature type="chain" id="PRO_0000264525" description="DNA-directed RNA polymerase subunit alpha">
    <location>
        <begin position="1"/>
        <end position="329"/>
    </location>
</feature>
<feature type="region of interest" description="Alpha N-terminal domain (alpha-NTD)" evidence="1">
    <location>
        <begin position="1"/>
        <end position="231"/>
    </location>
</feature>
<feature type="region of interest" description="Alpha C-terminal domain (alpha-CTD)" evidence="1">
    <location>
        <begin position="249"/>
        <end position="329"/>
    </location>
</feature>
<name>RPOA_POLSJ</name>
<comment type="function">
    <text evidence="1">DNA-dependent RNA polymerase catalyzes the transcription of DNA into RNA using the four ribonucleoside triphosphates as substrates.</text>
</comment>
<comment type="catalytic activity">
    <reaction evidence="1">
        <text>RNA(n) + a ribonucleoside 5'-triphosphate = RNA(n+1) + diphosphate</text>
        <dbReference type="Rhea" id="RHEA:21248"/>
        <dbReference type="Rhea" id="RHEA-COMP:14527"/>
        <dbReference type="Rhea" id="RHEA-COMP:17342"/>
        <dbReference type="ChEBI" id="CHEBI:33019"/>
        <dbReference type="ChEBI" id="CHEBI:61557"/>
        <dbReference type="ChEBI" id="CHEBI:140395"/>
        <dbReference type="EC" id="2.7.7.6"/>
    </reaction>
</comment>
<comment type="subunit">
    <text evidence="1">Homodimer. The RNAP catalytic core consists of 2 alpha, 1 beta, 1 beta' and 1 omega subunit. When a sigma factor is associated with the core the holoenzyme is formed, which can initiate transcription.</text>
</comment>
<comment type="domain">
    <text evidence="1">The N-terminal domain is essential for RNAP assembly and basal transcription, whereas the C-terminal domain is involved in interaction with transcriptional regulators and with upstream promoter elements.</text>
</comment>
<comment type="similarity">
    <text evidence="1">Belongs to the RNA polymerase alpha chain family.</text>
</comment>
<sequence>MQTNLLKPKTINVEQLGANRAKVTLEPFERGYGHTLGNALRRVLLSSMVGHAATEVTIAGVLHEYSSIDGVQEDVVNILLNLKGVVFKLHNRDEVTLSLRKDGEGPVTAADIQTPHDVEIINPEHVIVNLSHGGKIDMQIKVENGRGYVPGTMRRYGDESPKSIGRIVLDASFSPVKRVSYTVESARVEQRTDLDKLVLEIETNGAVTAEDAVRASAKILVEQLAVFAQLEGNELAAFDAPVQRSSQQFDPILLRPVDELELTVRSANCLKAENIYYIGDLIQRTENELLKTPNLGRKSLNEIKEVLASRGLTLGMRLESWPPAGLDKR</sequence>
<gene>
    <name evidence="1" type="primary">rpoA</name>
    <name type="ordered locus">Bpro_0501</name>
</gene>
<keyword id="KW-0240">DNA-directed RNA polymerase</keyword>
<keyword id="KW-0548">Nucleotidyltransferase</keyword>
<keyword id="KW-1185">Reference proteome</keyword>
<keyword id="KW-0804">Transcription</keyword>
<keyword id="KW-0808">Transferase</keyword>
<accession>Q12G77</accession>
<reference key="1">
    <citation type="journal article" date="2008" name="Appl. Environ. Microbiol.">
        <title>The genome of Polaromonas sp. strain JS666: insights into the evolution of a hydrocarbon- and xenobiotic-degrading bacterium, and features of relevance to biotechnology.</title>
        <authorList>
            <person name="Mattes T.E."/>
            <person name="Alexander A.K."/>
            <person name="Richardson P.M."/>
            <person name="Munk A.C."/>
            <person name="Han C.S."/>
            <person name="Stothard P."/>
            <person name="Coleman N.V."/>
        </authorList>
    </citation>
    <scope>NUCLEOTIDE SEQUENCE [LARGE SCALE GENOMIC DNA]</scope>
    <source>
        <strain>JS666 / ATCC BAA-500</strain>
    </source>
</reference>